<evidence type="ECO:0000250" key="1">
    <source>
        <dbReference type="UniProtKB" id="A9JQL9"/>
    </source>
</evidence>
<evidence type="ECO:0000250" key="2">
    <source>
        <dbReference type="UniProtKB" id="Q2FV59"/>
    </source>
</evidence>
<evidence type="ECO:0000269" key="3">
    <source>
    </source>
</evidence>
<evidence type="ECO:0000269" key="4">
    <source>
    </source>
</evidence>
<evidence type="ECO:0000269" key="5">
    <source>
    </source>
</evidence>
<evidence type="ECO:0000303" key="6">
    <source>
    </source>
</evidence>
<evidence type="ECO:0000305" key="7"/>
<evidence type="ECO:0000305" key="8">
    <source>
    </source>
</evidence>
<evidence type="ECO:0000305" key="9">
    <source>
    </source>
</evidence>
<sequence>MTMMDMNFKYCHKIMKKHSKSFSYAFDLLPEDQRKAVWAIYAVCRKIDDSIDVYGDIQFLNQIKEDIQSIEKYPYEHHHFQSDRRIMMALQHVAQHKNIAFQSFYNLIDTVYKDQHFTMFETDAELFGYCYGVAGTVGEVLTPILSDHETHQTYDVARRLGESLQLINILRDVGEDFDNERIYFSKQRLKQYEVDIAEVYQNGVNNHYIDLWEYYAAIAEKDFQDVMDQIKVFSIEAQPIIELAARIYIEILDEVRQANYTLHERVFVDKRKKAKLFHEINSKYHRI</sequence>
<gene>
    <name evidence="6" type="primary">crtM</name>
    <name type="ordered locus">NWMN_2462</name>
</gene>
<reference key="1">
    <citation type="journal article" date="1994" name="J. Bacteriol.">
        <title>Genetic and biochemical analyses of the biosynthesis of the yellow carotenoid 4,4'-diaponeurosporene of Staphylococcus aureus.</title>
        <authorList>
            <person name="Wieland B."/>
            <person name="Feil C."/>
            <person name="Gloria-Maercker E."/>
            <person name="Thumm G."/>
            <person name="Lechner M."/>
            <person name="Bravo J.-M."/>
            <person name="Poralla K."/>
            <person name="Goetz F."/>
        </authorList>
    </citation>
    <scope>NUCLEOTIDE SEQUENCE [GENOMIC DNA]</scope>
    <scope>FUNCTION</scope>
    <scope>CATALYTIC ACTIVITY</scope>
    <scope>PATHWAY</scope>
    <source>
        <strain>Newman</strain>
    </source>
</reference>
<reference key="2">
    <citation type="submission" date="1997-06" db="EMBL/GenBank/DDBJ databases">
        <authorList>
            <person name="Wieland B."/>
        </authorList>
    </citation>
    <scope>SEQUENCE REVISION</scope>
</reference>
<reference key="3">
    <citation type="journal article" date="2008" name="J. Bacteriol.">
        <title>Genome sequence of Staphylococcus aureus strain Newman and comparative analysis of staphylococcal genomes: polymorphism and evolution of two major pathogenicity islands.</title>
        <authorList>
            <person name="Baba T."/>
            <person name="Bae T."/>
            <person name="Schneewind O."/>
            <person name="Takeuchi F."/>
            <person name="Hiramatsu K."/>
        </authorList>
    </citation>
    <scope>NUCLEOTIDE SEQUENCE [LARGE SCALE GENOMIC DNA]</scope>
    <source>
        <strain>Newman</strain>
    </source>
</reference>
<reference key="4">
    <citation type="journal article" date="2001" name="Biochim. Biophys. Acta">
        <title>Functional properties of diapophytoene and related desaturases of C(30) and C(40) carotenoid biosynthetic pathways.</title>
        <authorList>
            <person name="Raisig A."/>
            <person name="Sandmann G."/>
        </authorList>
    </citation>
    <scope>SUBSTRATE SPECIFICITY</scope>
    <scope>PATHWAY</scope>
</reference>
<reference key="5">
    <citation type="journal article" date="2005" name="J. Biol. Chem.">
        <title>Structure and biosynthesis of staphyloxanthin from Staphylococcus aureus.</title>
        <authorList>
            <person name="Pelz A."/>
            <person name="Wieland K.-P."/>
            <person name="Putzbach K."/>
            <person name="Hentschel P."/>
            <person name="Albert K."/>
            <person name="Goetz F."/>
        </authorList>
    </citation>
    <scope>PATHWAY</scope>
</reference>
<accession>O07854</accession>
<accession>A6QK52</accession>
<accession>Q53722</accession>
<comment type="function">
    <text evidence="5">Involved in the biosynthesis of the yellow-orange carotenoid staphyloxanthin, which plays a role in the virulence via its protective function against oxidative stress. Catalyzes the head-to-head condensation of two molecules of farnesyl diphosphate (FPP) into the colorless C(30) carotenoid 4,4'-diapophytoene (dehydrosqualene).</text>
</comment>
<comment type="catalytic activity">
    <reaction evidence="5">
        <text>2 (2E,6E)-farnesyl diphosphate = 15-cis-4,4'-diapophytoene + 2 diphosphate</text>
        <dbReference type="Rhea" id="RHEA:31547"/>
        <dbReference type="ChEBI" id="CHEBI:33019"/>
        <dbReference type="ChEBI" id="CHEBI:62738"/>
        <dbReference type="ChEBI" id="CHEBI:175763"/>
        <dbReference type="EC" id="2.5.1.96"/>
    </reaction>
</comment>
<comment type="cofactor">
    <cofactor evidence="1">
        <name>Mg(2+)</name>
        <dbReference type="ChEBI" id="CHEBI:18420"/>
    </cofactor>
    <text evidence="1">Binds 2 Mg(2+) ions per subunit.</text>
</comment>
<comment type="pathway">
    <text evidence="4 8 9">Carotenoid biosynthesis; staphyloxanthin biosynthesis; staphyloxanthin from farnesyl diphosphate: step 1/5.</text>
</comment>
<comment type="miscellaneous">
    <text evidence="3">Upon coexpression with Rhodobacter geranylgeranyldiphosphate (GGDP) synthase, CrtM produces very small amounts of C(40) phytoene.</text>
</comment>
<comment type="similarity">
    <text evidence="7">Belongs to the phytoene/squalene synthase family. CrtM subfamily.</text>
</comment>
<comment type="sequence caution" evidence="7">
    <conflict type="frameshift">
        <sequence resource="EMBL-CDS" id="CAA52097"/>
    </conflict>
</comment>
<protein>
    <recommendedName>
        <fullName evidence="2">4,4'-diapophytoene synthase</fullName>
        <shortName evidence="2">DAP synthase</shortName>
        <ecNumber evidence="5">2.5.1.96</ecNumber>
    </recommendedName>
    <alternativeName>
        <fullName evidence="2">C30 carotenoid synthase</fullName>
    </alternativeName>
    <alternativeName>
        <fullName evidence="6">Dehydrosqualene synthase</fullName>
    </alternativeName>
</protein>
<dbReference type="EC" id="2.5.1.96" evidence="5"/>
<dbReference type="EMBL" id="X73889">
    <property type="protein sequence ID" value="CAA52097.1"/>
    <property type="status" value="ALT_FRAME"/>
    <property type="molecule type" value="Genomic_DNA"/>
</dbReference>
<dbReference type="EMBL" id="AP009351">
    <property type="protein sequence ID" value="BAF68734.1"/>
    <property type="molecule type" value="Genomic_DNA"/>
</dbReference>
<dbReference type="PIR" id="A55548">
    <property type="entry name" value="A55548"/>
</dbReference>
<dbReference type="RefSeq" id="WP_000178307.1">
    <property type="nucleotide sequence ID" value="NZ_JBBIAE010000005.1"/>
</dbReference>
<dbReference type="SMR" id="O07854"/>
<dbReference type="KEGG" id="sae:NWMN_2462"/>
<dbReference type="HOGENOM" id="CLU_037269_1_3_9"/>
<dbReference type="BioCyc" id="MetaCyc:MONOMER-13873"/>
<dbReference type="BRENDA" id="2.5.1.96">
    <property type="organism ID" value="3352"/>
</dbReference>
<dbReference type="UniPathway" id="UPA00029">
    <property type="reaction ID" value="UER00556"/>
</dbReference>
<dbReference type="Proteomes" id="UP000006386">
    <property type="component" value="Chromosome"/>
</dbReference>
<dbReference type="GO" id="GO:0004311">
    <property type="term" value="F:geranylgeranyl diphosphate synthase activity"/>
    <property type="evidence" value="ECO:0007669"/>
    <property type="project" value="InterPro"/>
</dbReference>
<dbReference type="GO" id="GO:0046872">
    <property type="term" value="F:metal ion binding"/>
    <property type="evidence" value="ECO:0007669"/>
    <property type="project" value="UniProtKB-KW"/>
</dbReference>
<dbReference type="GO" id="GO:0051996">
    <property type="term" value="F:squalene synthase [NAD(P)H] activity"/>
    <property type="evidence" value="ECO:0007669"/>
    <property type="project" value="InterPro"/>
</dbReference>
<dbReference type="GO" id="GO:0016117">
    <property type="term" value="P:carotenoid biosynthetic process"/>
    <property type="evidence" value="ECO:0007669"/>
    <property type="project" value="UniProtKB-KW"/>
</dbReference>
<dbReference type="CDD" id="cd00683">
    <property type="entry name" value="Trans_IPPS_HH"/>
    <property type="match status" value="1"/>
</dbReference>
<dbReference type="FunFam" id="1.10.600.10:FF:000028">
    <property type="entry name" value="Dehydrosqualene synthase"/>
    <property type="match status" value="1"/>
</dbReference>
<dbReference type="Gene3D" id="1.10.600.10">
    <property type="entry name" value="Farnesyl Diphosphate Synthase"/>
    <property type="match status" value="1"/>
</dbReference>
<dbReference type="InterPro" id="IPR008949">
    <property type="entry name" value="Isoprenoid_synthase_dom_sf"/>
</dbReference>
<dbReference type="InterPro" id="IPR002060">
    <property type="entry name" value="Squ/phyt_synthse"/>
</dbReference>
<dbReference type="InterPro" id="IPR019845">
    <property type="entry name" value="Squalene/phytoene_synthase_CS"/>
</dbReference>
<dbReference type="InterPro" id="IPR044843">
    <property type="entry name" value="Trans_IPPS_bact-type"/>
</dbReference>
<dbReference type="InterPro" id="IPR033904">
    <property type="entry name" value="Trans_IPPS_HH"/>
</dbReference>
<dbReference type="PANTHER" id="PTHR31480">
    <property type="entry name" value="BIFUNCTIONAL LYCOPENE CYCLASE/PHYTOENE SYNTHASE"/>
    <property type="match status" value="1"/>
</dbReference>
<dbReference type="Pfam" id="PF00494">
    <property type="entry name" value="SQS_PSY"/>
    <property type="match status" value="1"/>
</dbReference>
<dbReference type="SFLD" id="SFLDG01212">
    <property type="entry name" value="Phytoene_synthase_like"/>
    <property type="match status" value="1"/>
</dbReference>
<dbReference type="SFLD" id="SFLDG01018">
    <property type="entry name" value="Squalene/Phytoene_Synthase_Lik"/>
    <property type="match status" value="1"/>
</dbReference>
<dbReference type="SUPFAM" id="SSF48576">
    <property type="entry name" value="Terpenoid synthases"/>
    <property type="match status" value="1"/>
</dbReference>
<dbReference type="PROSITE" id="PS01044">
    <property type="entry name" value="SQUALEN_PHYTOEN_SYN_1"/>
    <property type="match status" value="1"/>
</dbReference>
<keyword id="KW-0125">Carotenoid biosynthesis</keyword>
<keyword id="KW-0460">Magnesium</keyword>
<keyword id="KW-0479">Metal-binding</keyword>
<keyword id="KW-0808">Transferase</keyword>
<keyword id="KW-0843">Virulence</keyword>
<organism>
    <name type="scientific">Staphylococcus aureus (strain Newman)</name>
    <dbReference type="NCBI Taxonomy" id="426430"/>
    <lineage>
        <taxon>Bacteria</taxon>
        <taxon>Bacillati</taxon>
        <taxon>Bacillota</taxon>
        <taxon>Bacilli</taxon>
        <taxon>Bacillales</taxon>
        <taxon>Staphylococcaceae</taxon>
        <taxon>Staphylococcus</taxon>
    </lineage>
</organism>
<feature type="chain" id="PRO_0000282615" description="4,4'-diapophytoene synthase">
    <location>
        <begin position="1"/>
        <end position="287"/>
    </location>
</feature>
<feature type="binding site" evidence="1">
    <location>
        <begin position="18"/>
        <end position="21"/>
    </location>
    <ligand>
        <name>(2E,6E)-farnesyl diphosphate</name>
        <dbReference type="ChEBI" id="CHEBI:175763"/>
        <label>1</label>
    </ligand>
</feature>
<feature type="binding site" evidence="1">
    <location>
        <position position="41"/>
    </location>
    <ligand>
        <name>(2E,6E)-farnesyl diphosphate</name>
        <dbReference type="ChEBI" id="CHEBI:175763"/>
        <label>1</label>
    </ligand>
</feature>
<feature type="binding site" evidence="1">
    <location>
        <position position="45"/>
    </location>
    <ligand>
        <name>(2E,6E)-farnesyl diphosphate</name>
        <dbReference type="ChEBI" id="CHEBI:175763"/>
        <label>1</label>
    </ligand>
</feature>
<feature type="binding site" evidence="1">
    <location>
        <position position="45"/>
    </location>
    <ligand>
        <name>(2E,6E)-farnesyl diphosphate</name>
        <dbReference type="ChEBI" id="CHEBI:175763"/>
        <label>2</label>
    </ligand>
</feature>
<feature type="binding site" evidence="1">
    <location>
        <position position="48"/>
    </location>
    <ligand>
        <name>Mg(2+)</name>
        <dbReference type="ChEBI" id="CHEBI:18420"/>
        <label>1</label>
    </ligand>
</feature>
<feature type="binding site" evidence="1">
    <location>
        <position position="52"/>
    </location>
    <ligand>
        <name>Mg(2+)</name>
        <dbReference type="ChEBI" id="CHEBI:18420"/>
        <label>1</label>
    </ligand>
</feature>
<feature type="binding site" evidence="1">
    <location>
        <position position="165"/>
    </location>
    <ligand>
        <name>(2E,6E)-farnesyl diphosphate</name>
        <dbReference type="ChEBI" id="CHEBI:175763"/>
        <label>2</label>
    </ligand>
</feature>
<feature type="binding site" evidence="1">
    <location>
        <position position="168"/>
    </location>
    <ligand>
        <name>Mg(2+)</name>
        <dbReference type="ChEBI" id="CHEBI:18420"/>
        <label>2</label>
    </ligand>
</feature>
<feature type="binding site" evidence="1">
    <location>
        <position position="171"/>
    </location>
    <ligand>
        <name>(2E,6E)-farnesyl diphosphate</name>
        <dbReference type="ChEBI" id="CHEBI:175763"/>
        <label>1</label>
    </ligand>
</feature>
<feature type="binding site" evidence="1">
    <location>
        <position position="172"/>
    </location>
    <ligand>
        <name>Mg(2+)</name>
        <dbReference type="ChEBI" id="CHEBI:18420"/>
        <label>2</label>
    </ligand>
</feature>
<feature type="binding site" evidence="1">
    <location>
        <position position="248"/>
    </location>
    <ligand>
        <name>(2E,6E)-farnesyl diphosphate</name>
        <dbReference type="ChEBI" id="CHEBI:175763"/>
        <label>1</label>
    </ligand>
</feature>
<feature type="sequence conflict" description="In Ref. 1; CAA52097." evidence="7" ref="1">
    <original>N</original>
    <variation>I</variation>
    <location>
        <position position="61"/>
    </location>
</feature>
<feature type="sequence conflict" description="In Ref. 1; CAA52097." evidence="7" ref="1">
    <original>Q</original>
    <variation>S</variation>
    <location>
        <position position="238"/>
    </location>
</feature>
<proteinExistence type="evidence at protein level"/>
<name>CRTM_STAAE</name>